<gene>
    <name evidence="1" type="primary">hemF</name>
    <name type="ordered locus">FTF1063</name>
</gene>
<dbReference type="EC" id="1.3.3.3" evidence="1"/>
<dbReference type="EMBL" id="AM286280">
    <property type="protein sequence ID" value="CAL09079.1"/>
    <property type="molecule type" value="Genomic_DNA"/>
</dbReference>
<dbReference type="RefSeq" id="WP_003023689.1">
    <property type="nucleotide sequence ID" value="NC_008245.1"/>
</dbReference>
<dbReference type="SMR" id="Q14HF0"/>
<dbReference type="KEGG" id="ftf:FTF1063"/>
<dbReference type="HOGENOM" id="CLU_026169_0_1_6"/>
<dbReference type="UniPathway" id="UPA00251">
    <property type="reaction ID" value="UER00322"/>
</dbReference>
<dbReference type="GO" id="GO:0005737">
    <property type="term" value="C:cytoplasm"/>
    <property type="evidence" value="ECO:0007669"/>
    <property type="project" value="UniProtKB-SubCell"/>
</dbReference>
<dbReference type="GO" id="GO:0004109">
    <property type="term" value="F:coproporphyrinogen oxidase activity"/>
    <property type="evidence" value="ECO:0007669"/>
    <property type="project" value="UniProtKB-UniRule"/>
</dbReference>
<dbReference type="GO" id="GO:0046872">
    <property type="term" value="F:metal ion binding"/>
    <property type="evidence" value="ECO:0007669"/>
    <property type="project" value="UniProtKB-KW"/>
</dbReference>
<dbReference type="GO" id="GO:0042803">
    <property type="term" value="F:protein homodimerization activity"/>
    <property type="evidence" value="ECO:0000250"/>
    <property type="project" value="UniProtKB"/>
</dbReference>
<dbReference type="GO" id="GO:0006782">
    <property type="term" value="P:protoporphyrinogen IX biosynthetic process"/>
    <property type="evidence" value="ECO:0007669"/>
    <property type="project" value="UniProtKB-UniRule"/>
</dbReference>
<dbReference type="FunFam" id="3.40.1500.10:FF:000010">
    <property type="entry name" value="Oxygen-dependent coproporphyrinogen-III oxidase"/>
    <property type="match status" value="1"/>
</dbReference>
<dbReference type="Gene3D" id="3.40.1500.10">
    <property type="entry name" value="Coproporphyrinogen III oxidase, aerobic"/>
    <property type="match status" value="1"/>
</dbReference>
<dbReference type="HAMAP" id="MF_00333">
    <property type="entry name" value="Coprogen_oxidas"/>
    <property type="match status" value="1"/>
</dbReference>
<dbReference type="InterPro" id="IPR001260">
    <property type="entry name" value="Coprogen_oxidase_aer"/>
</dbReference>
<dbReference type="InterPro" id="IPR036406">
    <property type="entry name" value="Coprogen_oxidase_aer_sf"/>
</dbReference>
<dbReference type="InterPro" id="IPR018375">
    <property type="entry name" value="Coprogen_oxidase_CS"/>
</dbReference>
<dbReference type="NCBIfam" id="NF003727">
    <property type="entry name" value="PRK05330.1"/>
    <property type="match status" value="1"/>
</dbReference>
<dbReference type="PANTHER" id="PTHR10755">
    <property type="entry name" value="COPROPORPHYRINOGEN III OXIDASE, MITOCHONDRIAL"/>
    <property type="match status" value="1"/>
</dbReference>
<dbReference type="PANTHER" id="PTHR10755:SF0">
    <property type="entry name" value="OXYGEN-DEPENDENT COPROPORPHYRINOGEN-III OXIDASE, MITOCHONDRIAL"/>
    <property type="match status" value="1"/>
</dbReference>
<dbReference type="Pfam" id="PF01218">
    <property type="entry name" value="Coprogen_oxidas"/>
    <property type="match status" value="1"/>
</dbReference>
<dbReference type="PIRSF" id="PIRSF000166">
    <property type="entry name" value="Coproporphyri_ox"/>
    <property type="match status" value="1"/>
</dbReference>
<dbReference type="PRINTS" id="PR00073">
    <property type="entry name" value="COPRGNOXDASE"/>
</dbReference>
<dbReference type="SUPFAM" id="SSF102886">
    <property type="entry name" value="Coproporphyrinogen III oxidase"/>
    <property type="match status" value="1"/>
</dbReference>
<dbReference type="PROSITE" id="PS01021">
    <property type="entry name" value="COPROGEN_OXIDASE"/>
    <property type="match status" value="1"/>
</dbReference>
<comment type="function">
    <text evidence="1">Involved in the heme biosynthesis. Catalyzes the aerobic oxidative decarboxylation of propionate groups of rings A and B of coproporphyrinogen-III to yield the vinyl groups in protoporphyrinogen-IX.</text>
</comment>
<comment type="catalytic activity">
    <reaction evidence="1">
        <text>coproporphyrinogen III + O2 + 2 H(+) = protoporphyrinogen IX + 2 CO2 + 2 H2O</text>
        <dbReference type="Rhea" id="RHEA:18257"/>
        <dbReference type="ChEBI" id="CHEBI:15377"/>
        <dbReference type="ChEBI" id="CHEBI:15378"/>
        <dbReference type="ChEBI" id="CHEBI:15379"/>
        <dbReference type="ChEBI" id="CHEBI:16526"/>
        <dbReference type="ChEBI" id="CHEBI:57307"/>
        <dbReference type="ChEBI" id="CHEBI:57309"/>
        <dbReference type="EC" id="1.3.3.3"/>
    </reaction>
</comment>
<comment type="cofactor">
    <cofactor evidence="1">
        <name>a divalent metal cation</name>
        <dbReference type="ChEBI" id="CHEBI:60240"/>
    </cofactor>
</comment>
<comment type="pathway">
    <text evidence="1">Porphyrin-containing compound metabolism; protoporphyrin-IX biosynthesis; protoporphyrinogen-IX from coproporphyrinogen-III (O2 route): step 1/1.</text>
</comment>
<comment type="subunit">
    <text evidence="1">Homodimer.</text>
</comment>
<comment type="subcellular location">
    <subcellularLocation>
        <location evidence="1">Cytoplasm</location>
    </subcellularLocation>
</comment>
<comment type="similarity">
    <text evidence="1">Belongs to the aerobic coproporphyrinogen-III oxidase family.</text>
</comment>
<keyword id="KW-0963">Cytoplasm</keyword>
<keyword id="KW-0350">Heme biosynthesis</keyword>
<keyword id="KW-0479">Metal-binding</keyword>
<keyword id="KW-0560">Oxidoreductase</keyword>
<keyword id="KW-0627">Porphyrin biosynthesis</keyword>
<name>HEM6_FRAT1</name>
<protein>
    <recommendedName>
        <fullName evidence="1">Oxygen-dependent coproporphyrinogen-III oxidase</fullName>
        <shortName evidence="1">CPO</shortName>
        <shortName evidence="1">Coprogen oxidase</shortName>
        <shortName evidence="1">Coproporphyrinogenase</shortName>
        <ecNumber evidence="1">1.3.3.3</ecNumber>
    </recommendedName>
</protein>
<sequence>MQEKISKFEDFLTQLQQNITTALEQHETNAAKFISDKWQKPDTHDQKLKGYGNSMIIEGGEIFEKGVVAFSRVHGSELPPSATAKRQELAGKSFIATGLSLVIHPRNPFVPTSHANFRIFIAGADTDNPIWWFGGGFDLTPYYPFEEDAIHWHQTAKNICDKHDKTYYPKFKKWCDEYFYLKHRDECRGVGGLFFDDLNDKSFDECFNFVTDCANSYLDAYIPIVAQRKNIEYSQKHKDFQLYRRGRYVEFNLVFDRGTIFGLQSGGRTESILSSMPPIATWKYNWQPELGSEEEKVYQYIKPRDWIK</sequence>
<proteinExistence type="inferred from homology"/>
<accession>Q14HF0</accession>
<organism>
    <name type="scientific">Francisella tularensis subsp. tularensis (strain FSC 198)</name>
    <dbReference type="NCBI Taxonomy" id="393115"/>
    <lineage>
        <taxon>Bacteria</taxon>
        <taxon>Pseudomonadati</taxon>
        <taxon>Pseudomonadota</taxon>
        <taxon>Gammaproteobacteria</taxon>
        <taxon>Thiotrichales</taxon>
        <taxon>Francisellaceae</taxon>
        <taxon>Francisella</taxon>
    </lineage>
</organism>
<reference key="1">
    <citation type="journal article" date="2007" name="PLoS ONE">
        <title>Genome sequencing shows that European isolates of Francisella tularensis subspecies tularensis are almost identical to US laboratory strain Schu S4.</title>
        <authorList>
            <person name="Chaudhuri R.R."/>
            <person name="Ren C.-P."/>
            <person name="Desmond L."/>
            <person name="Vincent G.A."/>
            <person name="Silman N.J."/>
            <person name="Brehm J.K."/>
            <person name="Elmore M.J."/>
            <person name="Hudson M.J."/>
            <person name="Forsman M."/>
            <person name="Isherwood K.E."/>
            <person name="Gurycova D."/>
            <person name="Minton N.P."/>
            <person name="Titball R.W."/>
            <person name="Pallen M.J."/>
            <person name="Vipond R."/>
        </authorList>
    </citation>
    <scope>NUCLEOTIDE SEQUENCE [LARGE SCALE GENOMIC DNA]</scope>
    <source>
        <strain>FSC 198</strain>
    </source>
</reference>
<feature type="chain" id="PRO_1000133181" description="Oxygen-dependent coproporphyrinogen-III oxidase">
    <location>
        <begin position="1"/>
        <end position="308"/>
    </location>
</feature>
<feature type="region of interest" description="Important for dimerization" evidence="1">
    <location>
        <begin position="248"/>
        <end position="283"/>
    </location>
</feature>
<feature type="active site" description="Proton donor" evidence="1">
    <location>
        <position position="114"/>
    </location>
</feature>
<feature type="binding site" evidence="1">
    <location>
        <position position="100"/>
    </location>
    <ligand>
        <name>substrate</name>
    </ligand>
</feature>
<feature type="binding site" evidence="1">
    <location>
        <position position="104"/>
    </location>
    <ligand>
        <name>a divalent metal cation</name>
        <dbReference type="ChEBI" id="CHEBI:60240"/>
    </ligand>
</feature>
<feature type="binding site" evidence="1">
    <location>
        <position position="114"/>
    </location>
    <ligand>
        <name>a divalent metal cation</name>
        <dbReference type="ChEBI" id="CHEBI:60240"/>
    </ligand>
</feature>
<feature type="binding site" evidence="1">
    <location>
        <begin position="116"/>
        <end position="118"/>
    </location>
    <ligand>
        <name>substrate</name>
    </ligand>
</feature>
<feature type="binding site" evidence="1">
    <location>
        <position position="153"/>
    </location>
    <ligand>
        <name>a divalent metal cation</name>
        <dbReference type="ChEBI" id="CHEBI:60240"/>
    </ligand>
</feature>
<feature type="binding site" evidence="1">
    <location>
        <position position="183"/>
    </location>
    <ligand>
        <name>a divalent metal cation</name>
        <dbReference type="ChEBI" id="CHEBI:60240"/>
    </ligand>
</feature>
<feature type="binding site" evidence="1">
    <location>
        <begin position="266"/>
        <end position="268"/>
    </location>
    <ligand>
        <name>substrate</name>
    </ligand>
</feature>
<feature type="site" description="Important for dimerization" evidence="1">
    <location>
        <position position="183"/>
    </location>
</feature>
<evidence type="ECO:0000255" key="1">
    <source>
        <dbReference type="HAMAP-Rule" id="MF_00333"/>
    </source>
</evidence>